<keyword id="KW-0997">Cell inner membrane</keyword>
<keyword id="KW-1003">Cell membrane</keyword>
<keyword id="KW-0472">Membrane</keyword>
<keyword id="KW-0520">NAD</keyword>
<keyword id="KW-0560">Oxidoreductase</keyword>
<feature type="chain" id="PRO_1000145589" description="Glutathione-regulated potassium-efflux system ancillary protein KefG">
    <location>
        <begin position="1"/>
        <end position="182"/>
    </location>
</feature>
<proteinExistence type="inferred from homology"/>
<comment type="function">
    <text evidence="1">Regulatory subunit of a potassium efflux system that confers protection against electrophiles. Required for full activity of KefB.</text>
</comment>
<comment type="catalytic activity">
    <reaction evidence="1">
        <text>a quinone + NADH + H(+) = a quinol + NAD(+)</text>
        <dbReference type="Rhea" id="RHEA:46160"/>
        <dbReference type="ChEBI" id="CHEBI:15378"/>
        <dbReference type="ChEBI" id="CHEBI:24646"/>
        <dbReference type="ChEBI" id="CHEBI:57540"/>
        <dbReference type="ChEBI" id="CHEBI:57945"/>
        <dbReference type="ChEBI" id="CHEBI:132124"/>
        <dbReference type="EC" id="1.6.5.2"/>
    </reaction>
</comment>
<comment type="catalytic activity">
    <reaction evidence="1">
        <text>a quinone + NADPH + H(+) = a quinol + NADP(+)</text>
        <dbReference type="Rhea" id="RHEA:46164"/>
        <dbReference type="ChEBI" id="CHEBI:15378"/>
        <dbReference type="ChEBI" id="CHEBI:24646"/>
        <dbReference type="ChEBI" id="CHEBI:57783"/>
        <dbReference type="ChEBI" id="CHEBI:58349"/>
        <dbReference type="ChEBI" id="CHEBI:132124"/>
        <dbReference type="EC" id="1.6.5.2"/>
    </reaction>
</comment>
<comment type="subunit">
    <text evidence="1">Interacts with KefB.</text>
</comment>
<comment type="subcellular location">
    <subcellularLocation>
        <location evidence="1">Cell inner membrane</location>
        <topology evidence="1">Peripheral membrane protein</topology>
        <orientation evidence="1">Cytoplasmic side</orientation>
    </subcellularLocation>
</comment>
<comment type="similarity">
    <text evidence="1">Belongs to the NAD(P)H dehydrogenase (quinone) family. KefG subfamily.</text>
</comment>
<evidence type="ECO:0000255" key="1">
    <source>
        <dbReference type="HAMAP-Rule" id="MF_01415"/>
    </source>
</evidence>
<gene>
    <name evidence="1" type="primary">kefG</name>
    <name type="ordered locus">YPTS_3907</name>
</gene>
<protein>
    <recommendedName>
        <fullName evidence="1">Glutathione-regulated potassium-efflux system ancillary protein KefG</fullName>
    </recommendedName>
    <alternativeName>
        <fullName evidence="1">Putative quinone oxidoreductase KefG</fullName>
        <ecNumber evidence="1">1.6.5.2</ecNumber>
    </alternativeName>
</protein>
<organism>
    <name type="scientific">Yersinia pseudotuberculosis serotype IB (strain PB1/+)</name>
    <dbReference type="NCBI Taxonomy" id="502801"/>
    <lineage>
        <taxon>Bacteria</taxon>
        <taxon>Pseudomonadati</taxon>
        <taxon>Pseudomonadota</taxon>
        <taxon>Gammaproteobacteria</taxon>
        <taxon>Enterobacterales</taxon>
        <taxon>Yersiniaceae</taxon>
        <taxon>Yersinia</taxon>
    </lineage>
</organism>
<dbReference type="EC" id="1.6.5.2" evidence="1"/>
<dbReference type="EMBL" id="CP001048">
    <property type="protein sequence ID" value="ACC90856.1"/>
    <property type="molecule type" value="Genomic_DNA"/>
</dbReference>
<dbReference type="RefSeq" id="WP_002215966.1">
    <property type="nucleotide sequence ID" value="NZ_CP009780.1"/>
</dbReference>
<dbReference type="SMR" id="B2K5P7"/>
<dbReference type="GeneID" id="57974413"/>
<dbReference type="KEGG" id="ypb:YPTS_3907"/>
<dbReference type="PATRIC" id="fig|502801.10.peg.3372"/>
<dbReference type="GO" id="GO:0005886">
    <property type="term" value="C:plasma membrane"/>
    <property type="evidence" value="ECO:0007669"/>
    <property type="project" value="UniProtKB-SubCell"/>
</dbReference>
<dbReference type="GO" id="GO:0009055">
    <property type="term" value="F:electron transfer activity"/>
    <property type="evidence" value="ECO:0007669"/>
    <property type="project" value="TreeGrafter"/>
</dbReference>
<dbReference type="GO" id="GO:0010181">
    <property type="term" value="F:FMN binding"/>
    <property type="evidence" value="ECO:0007669"/>
    <property type="project" value="TreeGrafter"/>
</dbReference>
<dbReference type="GO" id="GO:0050136">
    <property type="term" value="F:NADH:ubiquinone reductase (non-electrogenic) activity"/>
    <property type="evidence" value="ECO:0007669"/>
    <property type="project" value="RHEA"/>
</dbReference>
<dbReference type="GO" id="GO:0008753">
    <property type="term" value="F:NADPH dehydrogenase (quinone) activity"/>
    <property type="evidence" value="ECO:0007669"/>
    <property type="project" value="RHEA"/>
</dbReference>
<dbReference type="GO" id="GO:1901381">
    <property type="term" value="P:positive regulation of potassium ion transmembrane transport"/>
    <property type="evidence" value="ECO:0007669"/>
    <property type="project" value="UniProtKB-UniRule"/>
</dbReference>
<dbReference type="GO" id="GO:0006813">
    <property type="term" value="P:potassium ion transport"/>
    <property type="evidence" value="ECO:0007669"/>
    <property type="project" value="InterPro"/>
</dbReference>
<dbReference type="FunFam" id="3.40.50.360:FF:000013">
    <property type="entry name" value="Glutathione-regulated potassium-efflux system ancillary protein KefG"/>
    <property type="match status" value="1"/>
</dbReference>
<dbReference type="Gene3D" id="3.40.50.360">
    <property type="match status" value="1"/>
</dbReference>
<dbReference type="HAMAP" id="MF_01415">
    <property type="entry name" value="K_H_efflux_KefG"/>
    <property type="match status" value="1"/>
</dbReference>
<dbReference type="InterPro" id="IPR003680">
    <property type="entry name" value="Flavodoxin_fold"/>
</dbReference>
<dbReference type="InterPro" id="IPR029039">
    <property type="entry name" value="Flavoprotein-like_sf"/>
</dbReference>
<dbReference type="InterPro" id="IPR023947">
    <property type="entry name" value="K_H_efflux_KefG"/>
</dbReference>
<dbReference type="InterPro" id="IPR046980">
    <property type="entry name" value="KefG/KefF"/>
</dbReference>
<dbReference type="NCBIfam" id="NF003430">
    <property type="entry name" value="PRK04930.1"/>
    <property type="match status" value="1"/>
</dbReference>
<dbReference type="PANTHER" id="PTHR47307">
    <property type="entry name" value="GLUTATHIONE-REGULATED POTASSIUM-EFFLUX SYSTEM ANCILLARY PROTEIN KEFG"/>
    <property type="match status" value="1"/>
</dbReference>
<dbReference type="PANTHER" id="PTHR47307:SF1">
    <property type="entry name" value="GLUTATHIONE-REGULATED POTASSIUM-EFFLUX SYSTEM ANCILLARY PROTEIN KEFG"/>
    <property type="match status" value="1"/>
</dbReference>
<dbReference type="Pfam" id="PF02525">
    <property type="entry name" value="Flavodoxin_2"/>
    <property type="match status" value="1"/>
</dbReference>
<dbReference type="SUPFAM" id="SSF52218">
    <property type="entry name" value="Flavoproteins"/>
    <property type="match status" value="1"/>
</dbReference>
<accession>B2K5P7</accession>
<name>KEFG_YERPB</name>
<reference key="1">
    <citation type="submission" date="2008-04" db="EMBL/GenBank/DDBJ databases">
        <title>Complete sequence of Yersinia pseudotuberculosis PB1/+.</title>
        <authorList>
            <person name="Copeland A."/>
            <person name="Lucas S."/>
            <person name="Lapidus A."/>
            <person name="Glavina del Rio T."/>
            <person name="Dalin E."/>
            <person name="Tice H."/>
            <person name="Bruce D."/>
            <person name="Goodwin L."/>
            <person name="Pitluck S."/>
            <person name="Munk A.C."/>
            <person name="Brettin T."/>
            <person name="Detter J.C."/>
            <person name="Han C."/>
            <person name="Tapia R."/>
            <person name="Schmutz J."/>
            <person name="Larimer F."/>
            <person name="Land M."/>
            <person name="Hauser L."/>
            <person name="Challacombe J.F."/>
            <person name="Green L."/>
            <person name="Lindler L.E."/>
            <person name="Nikolich M.P."/>
            <person name="Richardson P."/>
        </authorList>
    </citation>
    <scope>NUCLEOTIDE SEQUENCE [LARGE SCALE GENOMIC DNA]</scope>
    <source>
        <strain>PB1/+</strain>
    </source>
</reference>
<sequence>MLQPPKVLLLYAHPESQDSVANRVLLQPVQQLEHVTVHDLYAHYPDFFIDIHHEQQLLRDHQVIVFQHPLYTYSCPALLKEWLDRVLARGFANGVGGHALTGKHWRSVITTGEQEGTYRIGGYNRYPMEDILRPFELTAAMCHMHWINPMIIYWARRQKPETLASHAQAYVQWLQSPLTRGL</sequence>